<proteinExistence type="predicted"/>
<accession>U3H040</accession>
<gene>
    <name type="ORF">SPBC18E5.09c</name>
</gene>
<reference key="1">
    <citation type="journal article" date="2002" name="Nature">
        <title>The genome sequence of Schizosaccharomyces pombe.</title>
        <authorList>
            <person name="Wood V."/>
            <person name="Gwilliam R."/>
            <person name="Rajandream M.A."/>
            <person name="Lyne M.H."/>
            <person name="Lyne R."/>
            <person name="Stewart A."/>
            <person name="Sgouros J.G."/>
            <person name="Peat N."/>
            <person name="Hayles J."/>
            <person name="Baker S.G."/>
            <person name="Basham D."/>
            <person name="Bowman S."/>
            <person name="Brooks K."/>
            <person name="Brown D."/>
            <person name="Brown S."/>
            <person name="Chillingworth T."/>
            <person name="Churcher C.M."/>
            <person name="Collins M."/>
            <person name="Connor R."/>
            <person name="Cronin A."/>
            <person name="Davis P."/>
            <person name="Feltwell T."/>
            <person name="Fraser A."/>
            <person name="Gentles S."/>
            <person name="Goble A."/>
            <person name="Hamlin N."/>
            <person name="Harris D.E."/>
            <person name="Hidalgo J."/>
            <person name="Hodgson G."/>
            <person name="Holroyd S."/>
            <person name="Hornsby T."/>
            <person name="Howarth S."/>
            <person name="Huckle E.J."/>
            <person name="Hunt S."/>
            <person name="Jagels K."/>
            <person name="James K.D."/>
            <person name="Jones L."/>
            <person name="Jones M."/>
            <person name="Leather S."/>
            <person name="McDonald S."/>
            <person name="McLean J."/>
            <person name="Mooney P."/>
            <person name="Moule S."/>
            <person name="Mungall K.L."/>
            <person name="Murphy L.D."/>
            <person name="Niblett D."/>
            <person name="Odell C."/>
            <person name="Oliver K."/>
            <person name="O'Neil S."/>
            <person name="Pearson D."/>
            <person name="Quail M.A."/>
            <person name="Rabbinowitsch E."/>
            <person name="Rutherford K.M."/>
            <person name="Rutter S."/>
            <person name="Saunders D."/>
            <person name="Seeger K."/>
            <person name="Sharp S."/>
            <person name="Skelton J."/>
            <person name="Simmonds M.N."/>
            <person name="Squares R."/>
            <person name="Squares S."/>
            <person name="Stevens K."/>
            <person name="Taylor K."/>
            <person name="Taylor R.G."/>
            <person name="Tivey A."/>
            <person name="Walsh S.V."/>
            <person name="Warren T."/>
            <person name="Whitehead S."/>
            <person name="Woodward J.R."/>
            <person name="Volckaert G."/>
            <person name="Aert R."/>
            <person name="Robben J."/>
            <person name="Grymonprez B."/>
            <person name="Weltjens I."/>
            <person name="Vanstreels E."/>
            <person name="Rieger M."/>
            <person name="Schaefer M."/>
            <person name="Mueller-Auer S."/>
            <person name="Gabel C."/>
            <person name="Fuchs M."/>
            <person name="Duesterhoeft A."/>
            <person name="Fritzc C."/>
            <person name="Holzer E."/>
            <person name="Moestl D."/>
            <person name="Hilbert H."/>
            <person name="Borzym K."/>
            <person name="Langer I."/>
            <person name="Beck A."/>
            <person name="Lehrach H."/>
            <person name="Reinhardt R."/>
            <person name="Pohl T.M."/>
            <person name="Eger P."/>
            <person name="Zimmermann W."/>
            <person name="Wedler H."/>
            <person name="Wambutt R."/>
            <person name="Purnelle B."/>
            <person name="Goffeau A."/>
            <person name="Cadieu E."/>
            <person name="Dreano S."/>
            <person name="Gloux S."/>
            <person name="Lelaure V."/>
            <person name="Mottier S."/>
            <person name="Galibert F."/>
            <person name="Aves S.J."/>
            <person name="Xiang Z."/>
            <person name="Hunt C."/>
            <person name="Moore K."/>
            <person name="Hurst S.M."/>
            <person name="Lucas M."/>
            <person name="Rochet M."/>
            <person name="Gaillardin C."/>
            <person name="Tallada V.A."/>
            <person name="Garzon A."/>
            <person name="Thode G."/>
            <person name="Daga R.R."/>
            <person name="Cruzado L."/>
            <person name="Jimenez J."/>
            <person name="Sanchez M."/>
            <person name="del Rey F."/>
            <person name="Benito J."/>
            <person name="Dominguez A."/>
            <person name="Revuelta J.L."/>
            <person name="Moreno S."/>
            <person name="Armstrong J."/>
            <person name="Forsburg S.L."/>
            <person name="Cerutti L."/>
            <person name="Lowe T."/>
            <person name="McCombie W.R."/>
            <person name="Paulsen I."/>
            <person name="Potashkin J."/>
            <person name="Shpakovski G.V."/>
            <person name="Ussery D."/>
            <person name="Barrell B.G."/>
            <person name="Nurse P."/>
        </authorList>
    </citation>
    <scope>NUCLEOTIDE SEQUENCE [LARGE SCALE GENOMIC DNA]</scope>
    <source>
        <strain>972 / ATCC 24843</strain>
    </source>
</reference>
<reference key="2">
    <citation type="journal article" date="2011" name="Science">
        <title>Comparative functional genomics of the fission yeasts.</title>
        <authorList>
            <person name="Rhind N."/>
            <person name="Chen Z."/>
            <person name="Yassour M."/>
            <person name="Thompson D.A."/>
            <person name="Haas B.J."/>
            <person name="Habib N."/>
            <person name="Wapinski I."/>
            <person name="Roy S."/>
            <person name="Lin M.F."/>
            <person name="Heiman D.I."/>
            <person name="Young S.K."/>
            <person name="Furuya K."/>
            <person name="Guo Y."/>
            <person name="Pidoux A."/>
            <person name="Chen H.M."/>
            <person name="Robbertse B."/>
            <person name="Goldberg J.M."/>
            <person name="Aoki K."/>
            <person name="Bayne E.H."/>
            <person name="Berlin A.M."/>
            <person name="Desjardins C.A."/>
            <person name="Dobbs E."/>
            <person name="Dukaj L."/>
            <person name="Fan L."/>
            <person name="FitzGerald M.G."/>
            <person name="French C."/>
            <person name="Gujja S."/>
            <person name="Hansen K."/>
            <person name="Keifenheim D."/>
            <person name="Levin J.Z."/>
            <person name="Mosher R.A."/>
            <person name="Mueller C.A."/>
            <person name="Pfiffner J."/>
            <person name="Priest M."/>
            <person name="Russ C."/>
            <person name="Smialowska A."/>
            <person name="Swoboda P."/>
            <person name="Sykes S.M."/>
            <person name="Vaughn M."/>
            <person name="Vengrova S."/>
            <person name="Yoder R."/>
            <person name="Zeng Q."/>
            <person name="Allshire R."/>
            <person name="Baulcombe D."/>
            <person name="Birren B.W."/>
            <person name="Brown W."/>
            <person name="Ekwall K."/>
            <person name="Kellis M."/>
            <person name="Leatherwood J."/>
            <person name="Levin H."/>
            <person name="Margalit H."/>
            <person name="Martienssen R."/>
            <person name="Nieduszynski C.A."/>
            <person name="Spatafora J.W."/>
            <person name="Friedman N."/>
            <person name="Dalgaard J.Z."/>
            <person name="Baumann P."/>
            <person name="Niki H."/>
            <person name="Regev A."/>
            <person name="Nusbaum C."/>
        </authorList>
    </citation>
    <scope>REVISION OF GENE MODEL</scope>
</reference>
<feature type="chain" id="PRO_0000429005" description="Uncharacterized protein SPBC18E5.09c">
    <location>
        <begin position="1"/>
        <end position="128"/>
    </location>
</feature>
<keyword id="KW-1185">Reference proteome</keyword>
<dbReference type="EMBL" id="CU329671">
    <property type="protein sequence ID" value="CAA22669.1"/>
    <property type="molecule type" value="Genomic_DNA"/>
</dbReference>
<dbReference type="RefSeq" id="NP_595856.1">
    <property type="nucleotide sequence ID" value="NM_001021760.1"/>
</dbReference>
<dbReference type="PaxDb" id="4896-SPBC18E5.09c.1"/>
<dbReference type="EnsemblFungi" id="SPBC18E5.09c.1">
    <property type="protein sequence ID" value="SPBC18E5.09c.1:pep"/>
    <property type="gene ID" value="SPBC18E5.09c"/>
</dbReference>
<dbReference type="KEGG" id="spo:14217446"/>
<dbReference type="PomBase" id="SPBC18E5.09c"/>
<dbReference type="VEuPathDB" id="FungiDB:SPBC18E5.09c"/>
<dbReference type="HOGENOM" id="CLU_1960858_0_0_1"/>
<dbReference type="InParanoid" id="U3H040"/>
<dbReference type="PRO" id="PR:U3H040"/>
<dbReference type="Proteomes" id="UP000002485">
    <property type="component" value="Chromosome II"/>
</dbReference>
<protein>
    <recommendedName>
        <fullName>Uncharacterized protein SPBC18E5.09c</fullName>
    </recommendedName>
</protein>
<name>YBS9_SCHPO</name>
<organism>
    <name type="scientific">Schizosaccharomyces pombe (strain 972 / ATCC 24843)</name>
    <name type="common">Fission yeast</name>
    <dbReference type="NCBI Taxonomy" id="284812"/>
    <lineage>
        <taxon>Eukaryota</taxon>
        <taxon>Fungi</taxon>
        <taxon>Dikarya</taxon>
        <taxon>Ascomycota</taxon>
        <taxon>Taphrinomycotina</taxon>
        <taxon>Schizosaccharomycetes</taxon>
        <taxon>Schizosaccharomycetales</taxon>
        <taxon>Schizosaccharomycetaceae</taxon>
        <taxon>Schizosaccharomyces</taxon>
    </lineage>
</organism>
<sequence length="128" mass="14654">MTGPFRYNGGSVRSFALTTNFSFPSYDLSFNETEHGVFCYVSRPLTKERSCSHPYISLGSSYGIPDAENIEYPRDARYHSPLLFTVRLLLFSTYWSYSLASQHFKVFTVKESLLLLIISSNFGEPFFS</sequence>